<dbReference type="EMBL" id="BX640418">
    <property type="protein sequence ID" value="CAE42609.1"/>
    <property type="molecule type" value="Genomic_DNA"/>
</dbReference>
<dbReference type="RefSeq" id="NP_880974.1">
    <property type="nucleotide sequence ID" value="NC_002929.2"/>
</dbReference>
<dbReference type="RefSeq" id="WP_003813239.1">
    <property type="nucleotide sequence ID" value="NZ_CP039022.1"/>
</dbReference>
<dbReference type="SMR" id="Q7VWC4"/>
<dbReference type="STRING" id="257313.BP2336"/>
<dbReference type="PaxDb" id="257313-BP2336"/>
<dbReference type="KEGG" id="bpe:BP2336"/>
<dbReference type="PATRIC" id="fig|257313.5.peg.2518"/>
<dbReference type="eggNOG" id="COG2924">
    <property type="taxonomic scope" value="Bacteria"/>
</dbReference>
<dbReference type="HOGENOM" id="CLU_170994_0_0_4"/>
<dbReference type="Proteomes" id="UP000002676">
    <property type="component" value="Chromosome"/>
</dbReference>
<dbReference type="GO" id="GO:0005829">
    <property type="term" value="C:cytosol"/>
    <property type="evidence" value="ECO:0007669"/>
    <property type="project" value="TreeGrafter"/>
</dbReference>
<dbReference type="GO" id="GO:0005506">
    <property type="term" value="F:iron ion binding"/>
    <property type="evidence" value="ECO:0007669"/>
    <property type="project" value="UniProtKB-UniRule"/>
</dbReference>
<dbReference type="GO" id="GO:0034599">
    <property type="term" value="P:cellular response to oxidative stress"/>
    <property type="evidence" value="ECO:0007669"/>
    <property type="project" value="TreeGrafter"/>
</dbReference>
<dbReference type="FunFam" id="1.10.3880.10:FF:000001">
    <property type="entry name" value="Probable Fe(2+)-trafficking protein"/>
    <property type="match status" value="1"/>
</dbReference>
<dbReference type="Gene3D" id="1.10.3880.10">
    <property type="entry name" value="Fe(II) trafficking protein YggX"/>
    <property type="match status" value="1"/>
</dbReference>
<dbReference type="HAMAP" id="MF_00686">
    <property type="entry name" value="Fe_traffic_YggX"/>
    <property type="match status" value="1"/>
</dbReference>
<dbReference type="InterPro" id="IPR007457">
    <property type="entry name" value="Fe_traffick_prot_YggX"/>
</dbReference>
<dbReference type="InterPro" id="IPR036766">
    <property type="entry name" value="Fe_traffick_prot_YggX_sf"/>
</dbReference>
<dbReference type="NCBIfam" id="NF003817">
    <property type="entry name" value="PRK05408.1"/>
    <property type="match status" value="1"/>
</dbReference>
<dbReference type="PANTHER" id="PTHR36965">
    <property type="entry name" value="FE(2+)-TRAFFICKING PROTEIN-RELATED"/>
    <property type="match status" value="1"/>
</dbReference>
<dbReference type="PANTHER" id="PTHR36965:SF1">
    <property type="entry name" value="FE(2+)-TRAFFICKING PROTEIN-RELATED"/>
    <property type="match status" value="1"/>
</dbReference>
<dbReference type="Pfam" id="PF04362">
    <property type="entry name" value="Iron_traffic"/>
    <property type="match status" value="1"/>
</dbReference>
<dbReference type="PIRSF" id="PIRSF029827">
    <property type="entry name" value="Fe_traffic_YggX"/>
    <property type="match status" value="1"/>
</dbReference>
<dbReference type="SUPFAM" id="SSF111148">
    <property type="entry name" value="YggX-like"/>
    <property type="match status" value="1"/>
</dbReference>
<gene>
    <name type="ordered locus">BP2336</name>
</gene>
<reference key="1">
    <citation type="journal article" date="2003" name="Nat. Genet.">
        <title>Comparative analysis of the genome sequences of Bordetella pertussis, Bordetella parapertussis and Bordetella bronchiseptica.</title>
        <authorList>
            <person name="Parkhill J."/>
            <person name="Sebaihia M."/>
            <person name="Preston A."/>
            <person name="Murphy L.D."/>
            <person name="Thomson N.R."/>
            <person name="Harris D.E."/>
            <person name="Holden M.T.G."/>
            <person name="Churcher C.M."/>
            <person name="Bentley S.D."/>
            <person name="Mungall K.L."/>
            <person name="Cerdeno-Tarraga A.-M."/>
            <person name="Temple L."/>
            <person name="James K.D."/>
            <person name="Harris B."/>
            <person name="Quail M.A."/>
            <person name="Achtman M."/>
            <person name="Atkin R."/>
            <person name="Baker S."/>
            <person name="Basham D."/>
            <person name="Bason N."/>
            <person name="Cherevach I."/>
            <person name="Chillingworth T."/>
            <person name="Collins M."/>
            <person name="Cronin A."/>
            <person name="Davis P."/>
            <person name="Doggett J."/>
            <person name="Feltwell T."/>
            <person name="Goble A."/>
            <person name="Hamlin N."/>
            <person name="Hauser H."/>
            <person name="Holroyd S."/>
            <person name="Jagels K."/>
            <person name="Leather S."/>
            <person name="Moule S."/>
            <person name="Norberczak H."/>
            <person name="O'Neil S."/>
            <person name="Ormond D."/>
            <person name="Price C."/>
            <person name="Rabbinowitsch E."/>
            <person name="Rutter S."/>
            <person name="Sanders M."/>
            <person name="Saunders D."/>
            <person name="Seeger K."/>
            <person name="Sharp S."/>
            <person name="Simmonds M."/>
            <person name="Skelton J."/>
            <person name="Squares R."/>
            <person name="Squares S."/>
            <person name="Stevens K."/>
            <person name="Unwin L."/>
            <person name="Whitehead S."/>
            <person name="Barrell B.G."/>
            <person name="Maskell D.J."/>
        </authorList>
    </citation>
    <scope>NUCLEOTIDE SEQUENCE [LARGE SCALE GENOMIC DNA]</scope>
    <source>
        <strain>Tohama I / ATCC BAA-589 / NCTC 13251</strain>
    </source>
</reference>
<keyword id="KW-0408">Iron</keyword>
<keyword id="KW-1185">Reference proteome</keyword>
<feature type="chain" id="PRO_0000214469" description="Probable Fe(2+)-trafficking protein">
    <location>
        <begin position="1"/>
        <end position="90"/>
    </location>
</feature>
<comment type="function">
    <text evidence="1">Could be a mediator in iron transactions between iron acquisition and iron-requiring processes, such as synthesis and/or repair of Fe-S clusters in biosynthetic enzymes.</text>
</comment>
<comment type="similarity">
    <text evidence="1">Belongs to the Fe(2+)-trafficking protein family.</text>
</comment>
<evidence type="ECO:0000255" key="1">
    <source>
        <dbReference type="HAMAP-Rule" id="MF_00686"/>
    </source>
</evidence>
<accession>Q7VWC4</accession>
<sequence>MSRIVNCVKLKREAEGLDFPPYPGELGTRIWQQISKEAWEEWKQIQTRLVNENRLNLADARARKYLQQQMERFLFEDGTVEAQGYVPPSA</sequence>
<organism>
    <name type="scientific">Bordetella pertussis (strain Tohama I / ATCC BAA-589 / NCTC 13251)</name>
    <dbReference type="NCBI Taxonomy" id="257313"/>
    <lineage>
        <taxon>Bacteria</taxon>
        <taxon>Pseudomonadati</taxon>
        <taxon>Pseudomonadota</taxon>
        <taxon>Betaproteobacteria</taxon>
        <taxon>Burkholderiales</taxon>
        <taxon>Alcaligenaceae</taxon>
        <taxon>Bordetella</taxon>
    </lineage>
</organism>
<protein>
    <recommendedName>
        <fullName evidence="1">Probable Fe(2+)-trafficking protein</fullName>
    </recommendedName>
</protein>
<name>FETP_BORPE</name>
<proteinExistence type="inferred from homology"/>